<feature type="chain" id="PRO_0000121860" description="tRNA pseudouridine synthase B">
    <location>
        <begin position="1"/>
        <end position="305"/>
    </location>
</feature>
<feature type="active site" description="Nucleophile" evidence="1">
    <location>
        <position position="48"/>
    </location>
</feature>
<accession>Q65SL2</accession>
<dbReference type="EC" id="5.4.99.25" evidence="1"/>
<dbReference type="EMBL" id="AE016827">
    <property type="protein sequence ID" value="AAU38048.1"/>
    <property type="molecule type" value="Genomic_DNA"/>
</dbReference>
<dbReference type="RefSeq" id="WP_011200615.1">
    <property type="nucleotide sequence ID" value="NC_006300.1"/>
</dbReference>
<dbReference type="SMR" id="Q65SL2"/>
<dbReference type="STRING" id="221988.MS1441"/>
<dbReference type="KEGG" id="msu:MS1441"/>
<dbReference type="eggNOG" id="COG0130">
    <property type="taxonomic scope" value="Bacteria"/>
</dbReference>
<dbReference type="HOGENOM" id="CLU_032087_0_3_6"/>
<dbReference type="OrthoDB" id="9802309at2"/>
<dbReference type="Proteomes" id="UP000000607">
    <property type="component" value="Chromosome"/>
</dbReference>
<dbReference type="GO" id="GO:0003723">
    <property type="term" value="F:RNA binding"/>
    <property type="evidence" value="ECO:0007669"/>
    <property type="project" value="InterPro"/>
</dbReference>
<dbReference type="GO" id="GO:0160148">
    <property type="term" value="F:tRNA pseudouridine(55) synthase activity"/>
    <property type="evidence" value="ECO:0007669"/>
    <property type="project" value="UniProtKB-EC"/>
</dbReference>
<dbReference type="GO" id="GO:1990481">
    <property type="term" value="P:mRNA pseudouridine synthesis"/>
    <property type="evidence" value="ECO:0007669"/>
    <property type="project" value="TreeGrafter"/>
</dbReference>
<dbReference type="GO" id="GO:0031119">
    <property type="term" value="P:tRNA pseudouridine synthesis"/>
    <property type="evidence" value="ECO:0007669"/>
    <property type="project" value="UniProtKB-UniRule"/>
</dbReference>
<dbReference type="CDD" id="cd02573">
    <property type="entry name" value="PseudoU_synth_EcTruB"/>
    <property type="match status" value="1"/>
</dbReference>
<dbReference type="CDD" id="cd21152">
    <property type="entry name" value="PUA_TruB_bacterial"/>
    <property type="match status" value="1"/>
</dbReference>
<dbReference type="FunFam" id="3.30.2350.10:FF:000003">
    <property type="entry name" value="tRNA pseudouridine synthase B"/>
    <property type="match status" value="1"/>
</dbReference>
<dbReference type="Gene3D" id="3.30.2350.10">
    <property type="entry name" value="Pseudouridine synthase"/>
    <property type="match status" value="1"/>
</dbReference>
<dbReference type="Gene3D" id="2.30.130.10">
    <property type="entry name" value="PUA domain"/>
    <property type="match status" value="1"/>
</dbReference>
<dbReference type="HAMAP" id="MF_01080">
    <property type="entry name" value="TruB_bact"/>
    <property type="match status" value="1"/>
</dbReference>
<dbReference type="InterPro" id="IPR020103">
    <property type="entry name" value="PsdUridine_synth_cat_dom_sf"/>
</dbReference>
<dbReference type="InterPro" id="IPR002501">
    <property type="entry name" value="PsdUridine_synth_N"/>
</dbReference>
<dbReference type="InterPro" id="IPR015947">
    <property type="entry name" value="PUA-like_sf"/>
</dbReference>
<dbReference type="InterPro" id="IPR036974">
    <property type="entry name" value="PUA_sf"/>
</dbReference>
<dbReference type="InterPro" id="IPR014780">
    <property type="entry name" value="tRNA_psdUridine_synth_TruB"/>
</dbReference>
<dbReference type="InterPro" id="IPR015240">
    <property type="entry name" value="tRNA_sdUridine_synth_fam1_C"/>
</dbReference>
<dbReference type="InterPro" id="IPR032819">
    <property type="entry name" value="TruB_C"/>
</dbReference>
<dbReference type="NCBIfam" id="TIGR00431">
    <property type="entry name" value="TruB"/>
    <property type="match status" value="1"/>
</dbReference>
<dbReference type="PANTHER" id="PTHR13767:SF2">
    <property type="entry name" value="PSEUDOURIDYLATE SYNTHASE TRUB1"/>
    <property type="match status" value="1"/>
</dbReference>
<dbReference type="PANTHER" id="PTHR13767">
    <property type="entry name" value="TRNA-PSEUDOURIDINE SYNTHASE"/>
    <property type="match status" value="1"/>
</dbReference>
<dbReference type="Pfam" id="PF09157">
    <property type="entry name" value="TruB-C_2"/>
    <property type="match status" value="1"/>
</dbReference>
<dbReference type="Pfam" id="PF16198">
    <property type="entry name" value="TruB_C_2"/>
    <property type="match status" value="1"/>
</dbReference>
<dbReference type="Pfam" id="PF01509">
    <property type="entry name" value="TruB_N"/>
    <property type="match status" value="1"/>
</dbReference>
<dbReference type="SUPFAM" id="SSF55120">
    <property type="entry name" value="Pseudouridine synthase"/>
    <property type="match status" value="1"/>
</dbReference>
<dbReference type="SUPFAM" id="SSF88697">
    <property type="entry name" value="PUA domain-like"/>
    <property type="match status" value="1"/>
</dbReference>
<name>TRUB_MANSM</name>
<keyword id="KW-0413">Isomerase</keyword>
<keyword id="KW-0819">tRNA processing</keyword>
<protein>
    <recommendedName>
        <fullName evidence="1">tRNA pseudouridine synthase B</fullName>
        <ecNumber evidence="1">5.4.99.25</ecNumber>
    </recommendedName>
    <alternativeName>
        <fullName evidence="1">tRNA pseudouridine(55) synthase</fullName>
        <shortName evidence="1">Psi55 synthase</shortName>
    </alternativeName>
    <alternativeName>
        <fullName evidence="1">tRNA pseudouridylate synthase</fullName>
    </alternativeName>
    <alternativeName>
        <fullName evidence="1">tRNA-uridine isomerase</fullName>
    </alternativeName>
</protein>
<evidence type="ECO:0000255" key="1">
    <source>
        <dbReference type="HAMAP-Rule" id="MF_01080"/>
    </source>
</evidence>
<organism>
    <name type="scientific">Mannheimia succiniciproducens (strain KCTC 0769BP / MBEL55E)</name>
    <dbReference type="NCBI Taxonomy" id="221988"/>
    <lineage>
        <taxon>Bacteria</taxon>
        <taxon>Pseudomonadati</taxon>
        <taxon>Pseudomonadota</taxon>
        <taxon>Gammaproteobacteria</taxon>
        <taxon>Pasteurellales</taxon>
        <taxon>Pasteurellaceae</taxon>
        <taxon>Basfia</taxon>
    </lineage>
</organism>
<sequence>MSRPRKRGRDIHGVFLLDKPQGMSSNDILQKVKRIYQANKAGHTGALDPLATGMLPICLGEATKFSQFLLDADKRYQVIAKLGERTDTSDAEGQVVETRSVNVTEQKILDSLPHFRGDIMQVPTMFSALKHKGKPLYEYARAGIVVEREARPISIFELNFISYEAPYLTLEVHCSKGTYIRTLVDDLGEYLGCGAHVSMLRRTAVSDYPADKMLTWEQLQQFAQDEDLAALDARLLPVDSAVSKLPVLSLSEEQTKAVGFGQRVKFDNLQQLQGQVRLFSPQNVFLGVAEIGKDNVIRPSRMVNL</sequence>
<proteinExistence type="inferred from homology"/>
<reference key="1">
    <citation type="journal article" date="2004" name="Nat. Biotechnol.">
        <title>The genome sequence of the capnophilic rumen bacterium Mannheimia succiniciproducens.</title>
        <authorList>
            <person name="Hong S.H."/>
            <person name="Kim J.S."/>
            <person name="Lee S.Y."/>
            <person name="In Y.H."/>
            <person name="Choi S.S."/>
            <person name="Rih J.-K."/>
            <person name="Kim C.H."/>
            <person name="Jeong H."/>
            <person name="Hur C.G."/>
            <person name="Kim J.J."/>
        </authorList>
    </citation>
    <scope>NUCLEOTIDE SEQUENCE [LARGE SCALE GENOMIC DNA]</scope>
    <source>
        <strain>KCTC 0769BP / MBEL55E</strain>
    </source>
</reference>
<comment type="function">
    <text evidence="1">Responsible for synthesis of pseudouridine from uracil-55 in the psi GC loop of transfer RNAs.</text>
</comment>
<comment type="catalytic activity">
    <reaction evidence="1">
        <text>uridine(55) in tRNA = pseudouridine(55) in tRNA</text>
        <dbReference type="Rhea" id="RHEA:42532"/>
        <dbReference type="Rhea" id="RHEA-COMP:10101"/>
        <dbReference type="Rhea" id="RHEA-COMP:10102"/>
        <dbReference type="ChEBI" id="CHEBI:65314"/>
        <dbReference type="ChEBI" id="CHEBI:65315"/>
        <dbReference type="EC" id="5.4.99.25"/>
    </reaction>
</comment>
<comment type="similarity">
    <text evidence="1">Belongs to the pseudouridine synthase TruB family. Type 1 subfamily.</text>
</comment>
<gene>
    <name evidence="1" type="primary">truB</name>
    <name type="ordered locus">MS1441</name>
</gene>